<keyword id="KW-1185">Reference proteome</keyword>
<organism>
    <name type="scientific">Rhodopseudomonas palustris (strain HaA2)</name>
    <dbReference type="NCBI Taxonomy" id="316058"/>
    <lineage>
        <taxon>Bacteria</taxon>
        <taxon>Pseudomonadati</taxon>
        <taxon>Pseudomonadota</taxon>
        <taxon>Alphaproteobacteria</taxon>
        <taxon>Hyphomicrobiales</taxon>
        <taxon>Nitrobacteraceae</taxon>
        <taxon>Rhodopseudomonas</taxon>
    </lineage>
</organism>
<dbReference type="EMBL" id="CP000250">
    <property type="protein sequence ID" value="ABD04821.1"/>
    <property type="molecule type" value="Genomic_DNA"/>
</dbReference>
<dbReference type="RefSeq" id="WP_011439011.1">
    <property type="nucleotide sequence ID" value="NC_007778.1"/>
</dbReference>
<dbReference type="SMR" id="Q2J3Y9"/>
<dbReference type="STRING" id="316058.RPB_0109"/>
<dbReference type="KEGG" id="rpb:RPB_0109"/>
<dbReference type="eggNOG" id="COG1872">
    <property type="taxonomic scope" value="Bacteria"/>
</dbReference>
<dbReference type="HOGENOM" id="CLU_130694_3_0_5"/>
<dbReference type="OrthoDB" id="9801972at2"/>
<dbReference type="Proteomes" id="UP000008809">
    <property type="component" value="Chromosome"/>
</dbReference>
<dbReference type="GO" id="GO:0005737">
    <property type="term" value="C:cytoplasm"/>
    <property type="evidence" value="ECO:0007669"/>
    <property type="project" value="TreeGrafter"/>
</dbReference>
<dbReference type="Gene3D" id="3.30.1200.10">
    <property type="entry name" value="YggU-like"/>
    <property type="match status" value="1"/>
</dbReference>
<dbReference type="HAMAP" id="MF_00634">
    <property type="entry name" value="UPF0235"/>
    <property type="match status" value="1"/>
</dbReference>
<dbReference type="InterPro" id="IPR003746">
    <property type="entry name" value="DUF167"/>
</dbReference>
<dbReference type="InterPro" id="IPR036591">
    <property type="entry name" value="YggU-like_sf"/>
</dbReference>
<dbReference type="NCBIfam" id="TIGR00251">
    <property type="entry name" value="DUF167 family protein"/>
    <property type="match status" value="1"/>
</dbReference>
<dbReference type="NCBIfam" id="NF002348">
    <property type="entry name" value="PRK01310.1"/>
    <property type="match status" value="1"/>
</dbReference>
<dbReference type="PANTHER" id="PTHR13420">
    <property type="entry name" value="UPF0235 PROTEIN C15ORF40"/>
    <property type="match status" value="1"/>
</dbReference>
<dbReference type="PANTHER" id="PTHR13420:SF7">
    <property type="entry name" value="UPF0235 PROTEIN C15ORF40"/>
    <property type="match status" value="1"/>
</dbReference>
<dbReference type="Pfam" id="PF02594">
    <property type="entry name" value="DUF167"/>
    <property type="match status" value="1"/>
</dbReference>
<dbReference type="SMART" id="SM01152">
    <property type="entry name" value="DUF167"/>
    <property type="match status" value="1"/>
</dbReference>
<dbReference type="SUPFAM" id="SSF69786">
    <property type="entry name" value="YggU-like"/>
    <property type="match status" value="1"/>
</dbReference>
<gene>
    <name type="ordered locus">RPB_0109</name>
</gene>
<accession>Q2J3Y9</accession>
<name>Y109_RHOP2</name>
<proteinExistence type="inferred from homology"/>
<feature type="chain" id="PRO_1000056781" description="UPF0235 protein RPB_0109">
    <location>
        <begin position="1"/>
        <end position="108"/>
    </location>
</feature>
<sequence length="108" mass="11456">MAEAWRYSAQGVAVAVRVTPRGDRDEIDGLETLSDGRPVVKLRVRAIADGGEANRAVIELLAKALGVPKRNVRLLSGATSRQKQIAIDGDPKSLGETLRQLTAAKPAG</sequence>
<evidence type="ECO:0000255" key="1">
    <source>
        <dbReference type="HAMAP-Rule" id="MF_00634"/>
    </source>
</evidence>
<comment type="similarity">
    <text evidence="1">Belongs to the UPF0235 family.</text>
</comment>
<protein>
    <recommendedName>
        <fullName evidence="1">UPF0235 protein RPB_0109</fullName>
    </recommendedName>
</protein>
<reference key="1">
    <citation type="submission" date="2006-01" db="EMBL/GenBank/DDBJ databases">
        <title>Complete sequence of Rhodopseudomonas palustris HaA2.</title>
        <authorList>
            <consortium name="US DOE Joint Genome Institute"/>
            <person name="Copeland A."/>
            <person name="Lucas S."/>
            <person name="Lapidus A."/>
            <person name="Barry K."/>
            <person name="Detter J.C."/>
            <person name="Glavina T."/>
            <person name="Hammon N."/>
            <person name="Israni S."/>
            <person name="Pitluck S."/>
            <person name="Chain P."/>
            <person name="Malfatti S."/>
            <person name="Shin M."/>
            <person name="Vergez L."/>
            <person name="Schmutz J."/>
            <person name="Larimer F."/>
            <person name="Land M."/>
            <person name="Hauser L."/>
            <person name="Pelletier D.A."/>
            <person name="Kyrpides N."/>
            <person name="Anderson I."/>
            <person name="Oda Y."/>
            <person name="Harwood C.S."/>
            <person name="Richardson P."/>
        </authorList>
    </citation>
    <scope>NUCLEOTIDE SEQUENCE [LARGE SCALE GENOMIC DNA]</scope>
    <source>
        <strain>HaA2</strain>
    </source>
</reference>